<proteinExistence type="predicted"/>
<sequence length="94" mass="10359">MGALFRLLLQERGKAAEFYSRGRKQRRPSASCTFGGIWSSGVDMLPNGAVGSLTQLGPSRPVLGIDYSKKEFRGTAENVTGLNTILHFRKRTRS</sequence>
<protein>
    <recommendedName>
        <fullName evidence="2">Putative uncharacterized protein encoded by LINC01560</fullName>
    </recommendedName>
</protein>
<feature type="chain" id="PRO_0000328969" description="Putative uncharacterized protein encoded by LINC01560">
    <location>
        <begin position="1"/>
        <end position="94"/>
    </location>
</feature>
<feature type="sequence conflict" description="In Ref. 2; AAH25179." evidence="1" ref="2">
    <original>L</original>
    <variation>P</variation>
    <location>
        <position position="45"/>
    </location>
</feature>
<feature type="sequence conflict" description="In Ref. 2; AAH25179." evidence="1" ref="2">
    <original>T</original>
    <variation>I</variation>
    <location>
        <position position="84"/>
    </location>
</feature>
<organism>
    <name type="scientific">Homo sapiens</name>
    <name type="common">Human</name>
    <dbReference type="NCBI Taxonomy" id="9606"/>
    <lineage>
        <taxon>Eukaryota</taxon>
        <taxon>Metazoa</taxon>
        <taxon>Chordata</taxon>
        <taxon>Craniata</taxon>
        <taxon>Vertebrata</taxon>
        <taxon>Euteleostomi</taxon>
        <taxon>Mammalia</taxon>
        <taxon>Eutheria</taxon>
        <taxon>Euarchontoglires</taxon>
        <taxon>Primates</taxon>
        <taxon>Haplorrhini</taxon>
        <taxon>Catarrhini</taxon>
        <taxon>Hominidae</taxon>
        <taxon>Homo</taxon>
    </lineage>
</organism>
<dbReference type="EMBL" id="Z84466">
    <property type="status" value="NOT_ANNOTATED_CDS"/>
    <property type="molecule type" value="Genomic_DNA"/>
</dbReference>
<dbReference type="EMBL" id="BC025179">
    <property type="protein sequence ID" value="AAH25179.1"/>
    <property type="status" value="ALT_INIT"/>
    <property type="molecule type" value="mRNA"/>
</dbReference>
<dbReference type="BioMuta" id="HGNC:27333"/>
<dbReference type="AGR" id="HGNC:27333"/>
<dbReference type="GeneCards" id="LINC01560"/>
<dbReference type="HGNC" id="HGNC:27333">
    <property type="gene designation" value="LINC01560"/>
</dbReference>
<dbReference type="neXtProt" id="NX_Q8TB33"/>
<dbReference type="InParanoid" id="Q8TB33"/>
<dbReference type="PAN-GO" id="Q8TB33">
    <property type="GO annotations" value="0 GO annotations based on evolutionary models"/>
</dbReference>
<dbReference type="PhylomeDB" id="Q8TB33"/>
<dbReference type="PathwayCommons" id="Q8TB33"/>
<dbReference type="Pharos" id="Q8TB33">
    <property type="development level" value="Tdark"/>
</dbReference>
<dbReference type="PRO" id="PR:Q8TB33"/>
<dbReference type="Proteomes" id="UP000005640">
    <property type="component" value="Unplaced"/>
</dbReference>
<dbReference type="RNAct" id="Q8TB33">
    <property type="molecule type" value="protein"/>
</dbReference>
<accession>Q8TB33</accession>
<accession>Q5H9B1</accession>
<evidence type="ECO:0000305" key="1"/>
<evidence type="ECO:0000312" key="2">
    <source>
        <dbReference type="HGNC" id="HGNC:27333"/>
    </source>
</evidence>
<name>CX024_HUMAN</name>
<comment type="sequence caution" evidence="1">
    <conflict type="erroneous initiation">
        <sequence resource="EMBL-CDS" id="AAH25179"/>
    </conflict>
</comment>
<gene>
    <name evidence="2" type="primary">LINC01560</name>
    <name evidence="2" type="synonym">CXorf24</name>
</gene>
<keyword id="KW-1185">Reference proteome</keyword>
<reference key="1">
    <citation type="journal article" date="2005" name="Nature">
        <title>The DNA sequence of the human X chromosome.</title>
        <authorList>
            <person name="Ross M.T."/>
            <person name="Grafham D.V."/>
            <person name="Coffey A.J."/>
            <person name="Scherer S."/>
            <person name="McLay K."/>
            <person name="Muzny D."/>
            <person name="Platzer M."/>
            <person name="Howell G.R."/>
            <person name="Burrows C."/>
            <person name="Bird C.P."/>
            <person name="Frankish A."/>
            <person name="Lovell F.L."/>
            <person name="Howe K.L."/>
            <person name="Ashurst J.L."/>
            <person name="Fulton R.S."/>
            <person name="Sudbrak R."/>
            <person name="Wen G."/>
            <person name="Jones M.C."/>
            <person name="Hurles M.E."/>
            <person name="Andrews T.D."/>
            <person name="Scott C.E."/>
            <person name="Searle S."/>
            <person name="Ramser J."/>
            <person name="Whittaker A."/>
            <person name="Deadman R."/>
            <person name="Carter N.P."/>
            <person name="Hunt S.E."/>
            <person name="Chen R."/>
            <person name="Cree A."/>
            <person name="Gunaratne P."/>
            <person name="Havlak P."/>
            <person name="Hodgson A."/>
            <person name="Metzker M.L."/>
            <person name="Richards S."/>
            <person name="Scott G."/>
            <person name="Steffen D."/>
            <person name="Sodergren E."/>
            <person name="Wheeler D.A."/>
            <person name="Worley K.C."/>
            <person name="Ainscough R."/>
            <person name="Ambrose K.D."/>
            <person name="Ansari-Lari M.A."/>
            <person name="Aradhya S."/>
            <person name="Ashwell R.I."/>
            <person name="Babbage A.K."/>
            <person name="Bagguley C.L."/>
            <person name="Ballabio A."/>
            <person name="Banerjee R."/>
            <person name="Barker G.E."/>
            <person name="Barlow K.F."/>
            <person name="Barrett I.P."/>
            <person name="Bates K.N."/>
            <person name="Beare D.M."/>
            <person name="Beasley H."/>
            <person name="Beasley O."/>
            <person name="Beck A."/>
            <person name="Bethel G."/>
            <person name="Blechschmidt K."/>
            <person name="Brady N."/>
            <person name="Bray-Allen S."/>
            <person name="Bridgeman A.M."/>
            <person name="Brown A.J."/>
            <person name="Brown M.J."/>
            <person name="Bonnin D."/>
            <person name="Bruford E.A."/>
            <person name="Buhay C."/>
            <person name="Burch P."/>
            <person name="Burford D."/>
            <person name="Burgess J."/>
            <person name="Burrill W."/>
            <person name="Burton J."/>
            <person name="Bye J.M."/>
            <person name="Carder C."/>
            <person name="Carrel L."/>
            <person name="Chako J."/>
            <person name="Chapman J.C."/>
            <person name="Chavez D."/>
            <person name="Chen E."/>
            <person name="Chen G."/>
            <person name="Chen Y."/>
            <person name="Chen Z."/>
            <person name="Chinault C."/>
            <person name="Ciccodicola A."/>
            <person name="Clark S.Y."/>
            <person name="Clarke G."/>
            <person name="Clee C.M."/>
            <person name="Clegg S."/>
            <person name="Clerc-Blankenburg K."/>
            <person name="Clifford K."/>
            <person name="Cobley V."/>
            <person name="Cole C.G."/>
            <person name="Conquer J.S."/>
            <person name="Corby N."/>
            <person name="Connor R.E."/>
            <person name="David R."/>
            <person name="Davies J."/>
            <person name="Davis C."/>
            <person name="Davis J."/>
            <person name="Delgado O."/>
            <person name="Deshazo D."/>
            <person name="Dhami P."/>
            <person name="Ding Y."/>
            <person name="Dinh H."/>
            <person name="Dodsworth S."/>
            <person name="Draper H."/>
            <person name="Dugan-Rocha S."/>
            <person name="Dunham A."/>
            <person name="Dunn M."/>
            <person name="Durbin K.J."/>
            <person name="Dutta I."/>
            <person name="Eades T."/>
            <person name="Ellwood M."/>
            <person name="Emery-Cohen A."/>
            <person name="Errington H."/>
            <person name="Evans K.L."/>
            <person name="Faulkner L."/>
            <person name="Francis F."/>
            <person name="Frankland J."/>
            <person name="Fraser A.E."/>
            <person name="Galgoczy P."/>
            <person name="Gilbert J."/>
            <person name="Gill R."/>
            <person name="Gloeckner G."/>
            <person name="Gregory S.G."/>
            <person name="Gribble S."/>
            <person name="Griffiths C."/>
            <person name="Grocock R."/>
            <person name="Gu Y."/>
            <person name="Gwilliam R."/>
            <person name="Hamilton C."/>
            <person name="Hart E.A."/>
            <person name="Hawes A."/>
            <person name="Heath P.D."/>
            <person name="Heitmann K."/>
            <person name="Hennig S."/>
            <person name="Hernandez J."/>
            <person name="Hinzmann B."/>
            <person name="Ho S."/>
            <person name="Hoffs M."/>
            <person name="Howden P.J."/>
            <person name="Huckle E.J."/>
            <person name="Hume J."/>
            <person name="Hunt P.J."/>
            <person name="Hunt A.R."/>
            <person name="Isherwood J."/>
            <person name="Jacob L."/>
            <person name="Johnson D."/>
            <person name="Jones S."/>
            <person name="de Jong P.J."/>
            <person name="Joseph S.S."/>
            <person name="Keenan S."/>
            <person name="Kelly S."/>
            <person name="Kershaw J.K."/>
            <person name="Khan Z."/>
            <person name="Kioschis P."/>
            <person name="Klages S."/>
            <person name="Knights A.J."/>
            <person name="Kosiura A."/>
            <person name="Kovar-Smith C."/>
            <person name="Laird G.K."/>
            <person name="Langford C."/>
            <person name="Lawlor S."/>
            <person name="Leversha M."/>
            <person name="Lewis L."/>
            <person name="Liu W."/>
            <person name="Lloyd C."/>
            <person name="Lloyd D.M."/>
            <person name="Loulseged H."/>
            <person name="Loveland J.E."/>
            <person name="Lovell J.D."/>
            <person name="Lozado R."/>
            <person name="Lu J."/>
            <person name="Lyne R."/>
            <person name="Ma J."/>
            <person name="Maheshwari M."/>
            <person name="Matthews L.H."/>
            <person name="McDowall J."/>
            <person name="McLaren S."/>
            <person name="McMurray A."/>
            <person name="Meidl P."/>
            <person name="Meitinger T."/>
            <person name="Milne S."/>
            <person name="Miner G."/>
            <person name="Mistry S.L."/>
            <person name="Morgan M."/>
            <person name="Morris S."/>
            <person name="Mueller I."/>
            <person name="Mullikin J.C."/>
            <person name="Nguyen N."/>
            <person name="Nordsiek G."/>
            <person name="Nyakatura G."/>
            <person name="O'dell C.N."/>
            <person name="Okwuonu G."/>
            <person name="Palmer S."/>
            <person name="Pandian R."/>
            <person name="Parker D."/>
            <person name="Parrish J."/>
            <person name="Pasternak S."/>
            <person name="Patel D."/>
            <person name="Pearce A.V."/>
            <person name="Pearson D.M."/>
            <person name="Pelan S.E."/>
            <person name="Perez L."/>
            <person name="Porter K.M."/>
            <person name="Ramsey Y."/>
            <person name="Reichwald K."/>
            <person name="Rhodes S."/>
            <person name="Ridler K.A."/>
            <person name="Schlessinger D."/>
            <person name="Schueler M.G."/>
            <person name="Sehra H.K."/>
            <person name="Shaw-Smith C."/>
            <person name="Shen H."/>
            <person name="Sheridan E.M."/>
            <person name="Shownkeen R."/>
            <person name="Skuce C.D."/>
            <person name="Smith M.L."/>
            <person name="Sotheran E.C."/>
            <person name="Steingruber H.E."/>
            <person name="Steward C.A."/>
            <person name="Storey R."/>
            <person name="Swann R.M."/>
            <person name="Swarbreck D."/>
            <person name="Tabor P.E."/>
            <person name="Taudien S."/>
            <person name="Taylor T."/>
            <person name="Teague B."/>
            <person name="Thomas K."/>
            <person name="Thorpe A."/>
            <person name="Timms K."/>
            <person name="Tracey A."/>
            <person name="Trevanion S."/>
            <person name="Tromans A.C."/>
            <person name="d'Urso M."/>
            <person name="Verduzco D."/>
            <person name="Villasana D."/>
            <person name="Waldron L."/>
            <person name="Wall M."/>
            <person name="Wang Q."/>
            <person name="Warren J."/>
            <person name="Warry G.L."/>
            <person name="Wei X."/>
            <person name="West A."/>
            <person name="Whitehead S.L."/>
            <person name="Whiteley M.N."/>
            <person name="Wilkinson J.E."/>
            <person name="Willey D.L."/>
            <person name="Williams G."/>
            <person name="Williams L."/>
            <person name="Williamson A."/>
            <person name="Williamson H."/>
            <person name="Wilming L."/>
            <person name="Woodmansey R.L."/>
            <person name="Wray P.W."/>
            <person name="Yen J."/>
            <person name="Zhang J."/>
            <person name="Zhou J."/>
            <person name="Zoghbi H."/>
            <person name="Zorilla S."/>
            <person name="Buck D."/>
            <person name="Reinhardt R."/>
            <person name="Poustka A."/>
            <person name="Rosenthal A."/>
            <person name="Lehrach H."/>
            <person name="Meindl A."/>
            <person name="Minx P.J."/>
            <person name="Hillier L.W."/>
            <person name="Willard H.F."/>
            <person name="Wilson R.K."/>
            <person name="Waterston R.H."/>
            <person name="Rice C.M."/>
            <person name="Vaudin M."/>
            <person name="Coulson A."/>
            <person name="Nelson D.L."/>
            <person name="Weinstock G."/>
            <person name="Sulston J.E."/>
            <person name="Durbin R.M."/>
            <person name="Hubbard T."/>
            <person name="Gibbs R.A."/>
            <person name="Beck S."/>
            <person name="Rogers J."/>
            <person name="Bentley D.R."/>
        </authorList>
    </citation>
    <scope>NUCLEOTIDE SEQUENCE [LARGE SCALE GENOMIC DNA]</scope>
</reference>
<reference key="2">
    <citation type="journal article" date="2004" name="Genome Res.">
        <title>The status, quality, and expansion of the NIH full-length cDNA project: the Mammalian Gene Collection (MGC).</title>
        <authorList>
            <consortium name="The MGC Project Team"/>
        </authorList>
    </citation>
    <scope>NUCLEOTIDE SEQUENCE [LARGE SCALE MRNA]</scope>
    <source>
        <tissue>Cervix</tissue>
    </source>
</reference>